<sequence length="88" mass="10251">MSSFDKTMKFNFSDDSAETNVEEVLNTVYDALQEKGYNPINQIVGYLLSGDPAYIPRHRDARNLIRKLERDELIEELVKSYLEQHKEA</sequence>
<gene>
    <name type="ordered locus">RBAM_024500</name>
</gene>
<reference key="1">
    <citation type="journal article" date="2007" name="Nat. Biotechnol.">
        <title>Comparative analysis of the complete genome sequence of the plant growth-promoting bacterium Bacillus amyloliquefaciens FZB42.</title>
        <authorList>
            <person name="Chen X.H."/>
            <person name="Koumoutsi A."/>
            <person name="Scholz R."/>
            <person name="Eisenreich A."/>
            <person name="Schneider K."/>
            <person name="Heinemeyer I."/>
            <person name="Morgenstern B."/>
            <person name="Voss B."/>
            <person name="Hess W.R."/>
            <person name="Reva O."/>
            <person name="Junge H."/>
            <person name="Voigt B."/>
            <person name="Jungblut P.R."/>
            <person name="Vater J."/>
            <person name="Suessmuth R."/>
            <person name="Liesegang H."/>
            <person name="Strittmatter A."/>
            <person name="Gottschalk G."/>
            <person name="Borriss R."/>
        </authorList>
    </citation>
    <scope>NUCLEOTIDE SEQUENCE [LARGE SCALE GENOMIC DNA]</scope>
    <source>
        <strain>DSM 23117 / BGSC 10A6 / LMG 26770 / FZB42</strain>
    </source>
</reference>
<organism>
    <name type="scientific">Bacillus velezensis (strain DSM 23117 / BGSC 10A6 / LMG 26770 / FZB42)</name>
    <name type="common">Bacillus amyloliquefaciens subsp. plantarum</name>
    <dbReference type="NCBI Taxonomy" id="326423"/>
    <lineage>
        <taxon>Bacteria</taxon>
        <taxon>Bacillati</taxon>
        <taxon>Bacillota</taxon>
        <taxon>Bacilli</taxon>
        <taxon>Bacillales</taxon>
        <taxon>Bacillaceae</taxon>
        <taxon>Bacillus</taxon>
        <taxon>Bacillus amyloliquefaciens group</taxon>
    </lineage>
</organism>
<protein>
    <recommendedName>
        <fullName evidence="1">UPF0297 protein RBAM_024500</fullName>
    </recommendedName>
</protein>
<comment type="similarity">
    <text evidence="1">Belongs to the UPF0297 family.</text>
</comment>
<evidence type="ECO:0000255" key="1">
    <source>
        <dbReference type="HAMAP-Rule" id="MF_01507"/>
    </source>
</evidence>
<name>Y2450_BACVZ</name>
<feature type="chain" id="PRO_0000315245" description="UPF0297 protein RBAM_024500">
    <location>
        <begin position="1"/>
        <end position="88"/>
    </location>
</feature>
<accession>A7Z734</accession>
<proteinExistence type="inferred from homology"/>
<dbReference type="EMBL" id="CP000560">
    <property type="protein sequence ID" value="ABS74810.1"/>
    <property type="molecule type" value="Genomic_DNA"/>
</dbReference>
<dbReference type="RefSeq" id="WP_012118070.1">
    <property type="nucleotide sequence ID" value="NC_009725.2"/>
</dbReference>
<dbReference type="SMR" id="A7Z734"/>
<dbReference type="GeneID" id="93081590"/>
<dbReference type="KEGG" id="bay:RBAM_024500"/>
<dbReference type="HOGENOM" id="CLU_162466_0_0_9"/>
<dbReference type="Proteomes" id="UP000001120">
    <property type="component" value="Chromosome"/>
</dbReference>
<dbReference type="HAMAP" id="MF_01507">
    <property type="entry name" value="UPF0297"/>
    <property type="match status" value="1"/>
</dbReference>
<dbReference type="InterPro" id="IPR009309">
    <property type="entry name" value="IreB"/>
</dbReference>
<dbReference type="NCBIfam" id="NF003997">
    <property type="entry name" value="PRK05473.1"/>
    <property type="match status" value="1"/>
</dbReference>
<dbReference type="PANTHER" id="PTHR40067">
    <property type="entry name" value="UPF0297 PROTEIN YRZL"/>
    <property type="match status" value="1"/>
</dbReference>
<dbReference type="PANTHER" id="PTHR40067:SF1">
    <property type="entry name" value="UPF0297 PROTEIN YRZL"/>
    <property type="match status" value="1"/>
</dbReference>
<dbReference type="Pfam" id="PF06135">
    <property type="entry name" value="IreB"/>
    <property type="match status" value="1"/>
</dbReference>
<dbReference type="PIRSF" id="PIRSF037258">
    <property type="entry name" value="DUF965_bac"/>
    <property type="match status" value="1"/>
</dbReference>